<gene>
    <name evidence="1" type="primary">atpC</name>
    <name type="ordered locus">RPC_0173</name>
</gene>
<keyword id="KW-0066">ATP synthesis</keyword>
<keyword id="KW-0997">Cell inner membrane</keyword>
<keyword id="KW-1003">Cell membrane</keyword>
<keyword id="KW-0139">CF(1)</keyword>
<keyword id="KW-0375">Hydrogen ion transport</keyword>
<keyword id="KW-0406">Ion transport</keyword>
<keyword id="KW-0472">Membrane</keyword>
<keyword id="KW-0813">Transport</keyword>
<reference key="1">
    <citation type="submission" date="2006-03" db="EMBL/GenBank/DDBJ databases">
        <title>Complete sequence of Rhodopseudomonas palustris BisB18.</title>
        <authorList>
            <consortium name="US DOE Joint Genome Institute"/>
            <person name="Copeland A."/>
            <person name="Lucas S."/>
            <person name="Lapidus A."/>
            <person name="Barry K."/>
            <person name="Detter J.C."/>
            <person name="Glavina del Rio T."/>
            <person name="Hammon N."/>
            <person name="Israni S."/>
            <person name="Dalin E."/>
            <person name="Tice H."/>
            <person name="Pitluck S."/>
            <person name="Chain P."/>
            <person name="Malfatti S."/>
            <person name="Shin M."/>
            <person name="Vergez L."/>
            <person name="Schmutz J."/>
            <person name="Larimer F."/>
            <person name="Land M."/>
            <person name="Hauser L."/>
            <person name="Pelletier D.A."/>
            <person name="Kyrpides N."/>
            <person name="Anderson I."/>
            <person name="Oda Y."/>
            <person name="Harwood C.S."/>
            <person name="Richardson P."/>
        </authorList>
    </citation>
    <scope>NUCLEOTIDE SEQUENCE [LARGE SCALE GENOMIC DNA]</scope>
    <source>
        <strain>BisB18</strain>
    </source>
</reference>
<comment type="function">
    <text evidence="1">Produces ATP from ADP in the presence of a proton gradient across the membrane.</text>
</comment>
<comment type="subunit">
    <text>F-type ATPases have 2 components, CF(1) - the catalytic core - and CF(0) - the membrane proton channel. CF(1) has five subunits: alpha(3), beta(3), gamma(1), delta(1), epsilon(1). CF(0) has three main subunits: a, b and c.</text>
</comment>
<comment type="subcellular location">
    <subcellularLocation>
        <location evidence="1">Cell inner membrane</location>
        <topology evidence="1">Peripheral membrane protein</topology>
    </subcellularLocation>
</comment>
<comment type="similarity">
    <text evidence="1">Belongs to the ATPase epsilon chain family.</text>
</comment>
<sequence length="135" mass="14129">MATFQFDLVSPEKLAFSGQVDQVDIPGVEGDFGVLAGHAPVVAVIRPGLLTITAGGNQQKIVVLGGLAEVSDKGLTVLADVATSVAELDTAQFAQTISSMESSLAGKQGSELDRAIERLDHYKSIQHQLNATAMH</sequence>
<organism>
    <name type="scientific">Rhodopseudomonas palustris (strain BisB18)</name>
    <dbReference type="NCBI Taxonomy" id="316056"/>
    <lineage>
        <taxon>Bacteria</taxon>
        <taxon>Pseudomonadati</taxon>
        <taxon>Pseudomonadota</taxon>
        <taxon>Alphaproteobacteria</taxon>
        <taxon>Hyphomicrobiales</taxon>
        <taxon>Nitrobacteraceae</taxon>
        <taxon>Rhodopseudomonas</taxon>
    </lineage>
</organism>
<name>ATPE_RHOPB</name>
<accession>Q21CY8</accession>
<dbReference type="EMBL" id="CP000301">
    <property type="protein sequence ID" value="ABD85748.1"/>
    <property type="molecule type" value="Genomic_DNA"/>
</dbReference>
<dbReference type="SMR" id="Q21CY8"/>
<dbReference type="STRING" id="316056.RPC_0173"/>
<dbReference type="KEGG" id="rpc:RPC_0173"/>
<dbReference type="eggNOG" id="COG0355">
    <property type="taxonomic scope" value="Bacteria"/>
</dbReference>
<dbReference type="HOGENOM" id="CLU_084338_2_1_5"/>
<dbReference type="OrthoDB" id="9799969at2"/>
<dbReference type="GO" id="GO:0005886">
    <property type="term" value="C:plasma membrane"/>
    <property type="evidence" value="ECO:0007669"/>
    <property type="project" value="UniProtKB-SubCell"/>
</dbReference>
<dbReference type="GO" id="GO:0045259">
    <property type="term" value="C:proton-transporting ATP synthase complex"/>
    <property type="evidence" value="ECO:0007669"/>
    <property type="project" value="UniProtKB-KW"/>
</dbReference>
<dbReference type="GO" id="GO:0005524">
    <property type="term" value="F:ATP binding"/>
    <property type="evidence" value="ECO:0007669"/>
    <property type="project" value="UniProtKB-UniRule"/>
</dbReference>
<dbReference type="GO" id="GO:0046933">
    <property type="term" value="F:proton-transporting ATP synthase activity, rotational mechanism"/>
    <property type="evidence" value="ECO:0007669"/>
    <property type="project" value="UniProtKB-UniRule"/>
</dbReference>
<dbReference type="CDD" id="cd12152">
    <property type="entry name" value="F1-ATPase_delta"/>
    <property type="match status" value="1"/>
</dbReference>
<dbReference type="Gene3D" id="2.60.15.10">
    <property type="entry name" value="F0F1 ATP synthase delta/epsilon subunit, N-terminal"/>
    <property type="match status" value="1"/>
</dbReference>
<dbReference type="HAMAP" id="MF_00530">
    <property type="entry name" value="ATP_synth_epsil_bac"/>
    <property type="match status" value="1"/>
</dbReference>
<dbReference type="InterPro" id="IPR001469">
    <property type="entry name" value="ATP_synth_F1_dsu/esu"/>
</dbReference>
<dbReference type="InterPro" id="IPR020546">
    <property type="entry name" value="ATP_synth_F1_dsu/esu_N"/>
</dbReference>
<dbReference type="InterPro" id="IPR036771">
    <property type="entry name" value="ATPsynth_dsu/esu_N"/>
</dbReference>
<dbReference type="NCBIfam" id="TIGR01216">
    <property type="entry name" value="ATP_synt_epsi"/>
    <property type="match status" value="1"/>
</dbReference>
<dbReference type="NCBIfam" id="NF001851">
    <property type="entry name" value="PRK00571.2-4"/>
    <property type="match status" value="1"/>
</dbReference>
<dbReference type="NCBIfam" id="NF009982">
    <property type="entry name" value="PRK13448.1"/>
    <property type="match status" value="1"/>
</dbReference>
<dbReference type="PANTHER" id="PTHR13822">
    <property type="entry name" value="ATP SYNTHASE DELTA/EPSILON CHAIN"/>
    <property type="match status" value="1"/>
</dbReference>
<dbReference type="PANTHER" id="PTHR13822:SF10">
    <property type="entry name" value="ATP SYNTHASE EPSILON CHAIN, CHLOROPLASTIC"/>
    <property type="match status" value="1"/>
</dbReference>
<dbReference type="Pfam" id="PF02823">
    <property type="entry name" value="ATP-synt_DE_N"/>
    <property type="match status" value="1"/>
</dbReference>
<dbReference type="SUPFAM" id="SSF51344">
    <property type="entry name" value="Epsilon subunit of F1F0-ATP synthase N-terminal domain"/>
    <property type="match status" value="1"/>
</dbReference>
<feature type="chain" id="PRO_0000265876" description="ATP synthase epsilon chain">
    <location>
        <begin position="1"/>
        <end position="135"/>
    </location>
</feature>
<protein>
    <recommendedName>
        <fullName evidence="1">ATP synthase epsilon chain</fullName>
    </recommendedName>
    <alternativeName>
        <fullName evidence="1">ATP synthase F1 sector epsilon subunit</fullName>
    </alternativeName>
    <alternativeName>
        <fullName evidence="1">F-ATPase epsilon subunit</fullName>
    </alternativeName>
</protein>
<evidence type="ECO:0000255" key="1">
    <source>
        <dbReference type="HAMAP-Rule" id="MF_00530"/>
    </source>
</evidence>
<proteinExistence type="inferred from homology"/>